<accession>Q21FV3</accession>
<protein>
    <recommendedName>
        <fullName evidence="1">ATP phosphoribosyltransferase</fullName>
        <shortName evidence="1">ATP-PRT</shortName>
        <shortName evidence="1">ATP-PRTase</shortName>
        <ecNumber evidence="1">2.4.2.17</ecNumber>
    </recommendedName>
</protein>
<proteinExistence type="inferred from homology"/>
<feature type="chain" id="PRO_0000319532" description="ATP phosphoribosyltransferase">
    <location>
        <begin position="1"/>
        <end position="213"/>
    </location>
</feature>
<reference key="1">
    <citation type="journal article" date="2008" name="PLoS Genet.">
        <title>Complete genome sequence of the complex carbohydrate-degrading marine bacterium, Saccharophagus degradans strain 2-40 T.</title>
        <authorList>
            <person name="Weiner R.M."/>
            <person name="Taylor L.E. II"/>
            <person name="Henrissat B."/>
            <person name="Hauser L."/>
            <person name="Land M."/>
            <person name="Coutinho P.M."/>
            <person name="Rancurel C."/>
            <person name="Saunders E.H."/>
            <person name="Longmire A.G."/>
            <person name="Zhang H."/>
            <person name="Bayer E.A."/>
            <person name="Gilbert H.J."/>
            <person name="Larimer F."/>
            <person name="Zhulin I.B."/>
            <person name="Ekborg N.A."/>
            <person name="Lamed R."/>
            <person name="Richardson P.M."/>
            <person name="Borovok I."/>
            <person name="Hutcheson S."/>
        </authorList>
    </citation>
    <scope>NUCLEOTIDE SEQUENCE [LARGE SCALE GENOMIC DNA]</scope>
    <source>
        <strain>2-40 / ATCC 43961 / DSM 17024</strain>
    </source>
</reference>
<sequence length="213" mass="23050">MSQLTIALTKGRILLETLPLLEAAGIAPLEDISKSRKLTFETTSPDVRLLILRGSDVPTYVEFGAADVGVSGKDTILEHGSTGFYEPLDLRIAKCRLMTAGIAGETLKPGRIRVATKYTNLAKQYYAEQGRQVDLIKLYGAMELAPILSLADEIVDIVDTGNTLKANGLEARDHIADISSRLIVNKASMKMKHQQIEALIDAISSAVNERAAA</sequence>
<comment type="function">
    <text evidence="1">Catalyzes the condensation of ATP and 5-phosphoribose 1-diphosphate to form N'-(5'-phosphoribosyl)-ATP (PR-ATP). Has a crucial role in the pathway because the rate of histidine biosynthesis seems to be controlled primarily by regulation of HisG enzymatic activity.</text>
</comment>
<comment type="catalytic activity">
    <reaction evidence="1">
        <text>1-(5-phospho-beta-D-ribosyl)-ATP + diphosphate = 5-phospho-alpha-D-ribose 1-diphosphate + ATP</text>
        <dbReference type="Rhea" id="RHEA:18473"/>
        <dbReference type="ChEBI" id="CHEBI:30616"/>
        <dbReference type="ChEBI" id="CHEBI:33019"/>
        <dbReference type="ChEBI" id="CHEBI:58017"/>
        <dbReference type="ChEBI" id="CHEBI:73183"/>
        <dbReference type="EC" id="2.4.2.17"/>
    </reaction>
</comment>
<comment type="pathway">
    <text evidence="1">Amino-acid biosynthesis; L-histidine biosynthesis; L-histidine from 5-phospho-alpha-D-ribose 1-diphosphate: step 1/9.</text>
</comment>
<comment type="subunit">
    <text evidence="1">Heteromultimer composed of HisG and HisZ subunits.</text>
</comment>
<comment type="subcellular location">
    <subcellularLocation>
        <location evidence="1">Cytoplasm</location>
    </subcellularLocation>
</comment>
<comment type="domain">
    <text>Lacks the C-terminal regulatory region which is replaced by HisZ.</text>
</comment>
<comment type="similarity">
    <text evidence="1">Belongs to the ATP phosphoribosyltransferase family. Short subfamily.</text>
</comment>
<organism>
    <name type="scientific">Saccharophagus degradans (strain 2-40 / ATCC 43961 / DSM 17024)</name>
    <dbReference type="NCBI Taxonomy" id="203122"/>
    <lineage>
        <taxon>Bacteria</taxon>
        <taxon>Pseudomonadati</taxon>
        <taxon>Pseudomonadota</taxon>
        <taxon>Gammaproteobacteria</taxon>
        <taxon>Cellvibrionales</taxon>
        <taxon>Cellvibrionaceae</taxon>
        <taxon>Saccharophagus</taxon>
    </lineage>
</organism>
<name>HIS1_SACD2</name>
<dbReference type="EC" id="2.4.2.17" evidence="1"/>
<dbReference type="EMBL" id="CP000282">
    <property type="protein sequence ID" value="ABD82426.1"/>
    <property type="molecule type" value="Genomic_DNA"/>
</dbReference>
<dbReference type="RefSeq" id="WP_011469642.1">
    <property type="nucleotide sequence ID" value="NC_007912.1"/>
</dbReference>
<dbReference type="SMR" id="Q21FV3"/>
<dbReference type="STRING" id="203122.Sde_3169"/>
<dbReference type="GeneID" id="98614796"/>
<dbReference type="KEGG" id="sde:Sde_3169"/>
<dbReference type="eggNOG" id="COG0040">
    <property type="taxonomic scope" value="Bacteria"/>
</dbReference>
<dbReference type="HOGENOM" id="CLU_038115_2_0_6"/>
<dbReference type="OrthoDB" id="9801867at2"/>
<dbReference type="UniPathway" id="UPA00031">
    <property type="reaction ID" value="UER00006"/>
</dbReference>
<dbReference type="Proteomes" id="UP000001947">
    <property type="component" value="Chromosome"/>
</dbReference>
<dbReference type="GO" id="GO:0005737">
    <property type="term" value="C:cytoplasm"/>
    <property type="evidence" value="ECO:0007669"/>
    <property type="project" value="UniProtKB-SubCell"/>
</dbReference>
<dbReference type="GO" id="GO:0005524">
    <property type="term" value="F:ATP binding"/>
    <property type="evidence" value="ECO:0007669"/>
    <property type="project" value="UniProtKB-KW"/>
</dbReference>
<dbReference type="GO" id="GO:0003879">
    <property type="term" value="F:ATP phosphoribosyltransferase activity"/>
    <property type="evidence" value="ECO:0007669"/>
    <property type="project" value="UniProtKB-UniRule"/>
</dbReference>
<dbReference type="GO" id="GO:0000105">
    <property type="term" value="P:L-histidine biosynthetic process"/>
    <property type="evidence" value="ECO:0007669"/>
    <property type="project" value="UniProtKB-UniRule"/>
</dbReference>
<dbReference type="CDD" id="cd13595">
    <property type="entry name" value="PBP2_HisGs"/>
    <property type="match status" value="1"/>
</dbReference>
<dbReference type="FunFam" id="3.40.190.10:FF:000011">
    <property type="entry name" value="ATP phosphoribosyltransferase"/>
    <property type="match status" value="1"/>
</dbReference>
<dbReference type="Gene3D" id="3.40.190.10">
    <property type="entry name" value="Periplasmic binding protein-like II"/>
    <property type="match status" value="2"/>
</dbReference>
<dbReference type="HAMAP" id="MF_01018">
    <property type="entry name" value="HisG_Short"/>
    <property type="match status" value="1"/>
</dbReference>
<dbReference type="InterPro" id="IPR013820">
    <property type="entry name" value="ATP_PRibTrfase_cat"/>
</dbReference>
<dbReference type="InterPro" id="IPR001348">
    <property type="entry name" value="ATP_PRibTrfase_HisG"/>
</dbReference>
<dbReference type="InterPro" id="IPR024893">
    <property type="entry name" value="ATP_PRibTrfase_HisG_short"/>
</dbReference>
<dbReference type="NCBIfam" id="TIGR00070">
    <property type="entry name" value="hisG"/>
    <property type="match status" value="1"/>
</dbReference>
<dbReference type="PANTHER" id="PTHR21403:SF8">
    <property type="entry name" value="ATP PHOSPHORIBOSYLTRANSFERASE"/>
    <property type="match status" value="1"/>
</dbReference>
<dbReference type="PANTHER" id="PTHR21403">
    <property type="entry name" value="ATP PHOSPHORIBOSYLTRANSFERASE ATP-PRTASE"/>
    <property type="match status" value="1"/>
</dbReference>
<dbReference type="Pfam" id="PF01634">
    <property type="entry name" value="HisG"/>
    <property type="match status" value="1"/>
</dbReference>
<dbReference type="SUPFAM" id="SSF53850">
    <property type="entry name" value="Periplasmic binding protein-like II"/>
    <property type="match status" value="1"/>
</dbReference>
<evidence type="ECO:0000255" key="1">
    <source>
        <dbReference type="HAMAP-Rule" id="MF_01018"/>
    </source>
</evidence>
<keyword id="KW-0028">Amino-acid biosynthesis</keyword>
<keyword id="KW-0067">ATP-binding</keyword>
<keyword id="KW-0963">Cytoplasm</keyword>
<keyword id="KW-0328">Glycosyltransferase</keyword>
<keyword id="KW-0368">Histidine biosynthesis</keyword>
<keyword id="KW-0547">Nucleotide-binding</keyword>
<keyword id="KW-1185">Reference proteome</keyword>
<keyword id="KW-0808">Transferase</keyword>
<gene>
    <name evidence="1" type="primary">hisG</name>
    <name type="ordered locus">Sde_3169</name>
</gene>